<proteinExistence type="evidence at protein level"/>
<evidence type="ECO:0000250" key="1"/>
<evidence type="ECO:0000269" key="2">
    <source>
    </source>
</evidence>
<evidence type="ECO:0000269" key="3">
    <source>
    </source>
</evidence>
<evidence type="ECO:0000269" key="4">
    <source>
    </source>
</evidence>
<evidence type="ECO:0000305" key="5"/>
<evidence type="ECO:0007744" key="6">
    <source>
    </source>
</evidence>
<evidence type="ECO:0007829" key="7">
    <source>
        <dbReference type="PDB" id="2P4Q"/>
    </source>
</evidence>
<comment type="function">
    <text evidence="4">Catalyzes the oxidative decarboxylation of 6-phosphogluconate to ribulose 5-phosphate and CO(2), with concomitant reduction of NADP to NADPH.</text>
</comment>
<comment type="catalytic activity">
    <reaction evidence="4">
        <text>6-phospho-D-gluconate + NADP(+) = D-ribulose 5-phosphate + CO2 + NADPH</text>
        <dbReference type="Rhea" id="RHEA:10116"/>
        <dbReference type="ChEBI" id="CHEBI:16526"/>
        <dbReference type="ChEBI" id="CHEBI:57783"/>
        <dbReference type="ChEBI" id="CHEBI:58121"/>
        <dbReference type="ChEBI" id="CHEBI:58349"/>
        <dbReference type="ChEBI" id="CHEBI:58759"/>
        <dbReference type="EC" id="1.1.1.44"/>
    </reaction>
</comment>
<comment type="biophysicochemical properties">
    <kinetics>
        <KM evidence="4">50 uM for 6-phosphogluconate</KM>
        <KM evidence="4">35 uM for NADP</KM>
    </kinetics>
</comment>
<comment type="pathway">
    <text>Carbohydrate degradation; pentose phosphate pathway; D-ribulose 5-phosphate from D-glucose 6-phosphate (oxidative stage): step 3/3.</text>
</comment>
<comment type="subunit">
    <text evidence="4">Homodimer.</text>
</comment>
<comment type="subcellular location">
    <subcellularLocation>
        <location evidence="2">Cytoplasm</location>
    </subcellularLocation>
</comment>
<comment type="miscellaneous">
    <text evidence="3">Present with 101000 molecules/cell in log phase SD medium.</text>
</comment>
<comment type="similarity">
    <text evidence="5">Belongs to the 6-phosphogluconate dehydrogenase family.</text>
</comment>
<accession>P38720</accession>
<accession>D3DLD1</accession>
<sequence length="489" mass="53543">MSADFGLIGLAVMGQNLILNAADHGFTVCAYNRTQSKVDHFLANEAKGKSIIGATSIEDFISKLKRPRKVMLLVKAGAPVDALINQIVPLLEKGDIIIDGGNSHFPDSNRRYEELKKKGILFVGSGVSGGEEGARYGPSLMPGGSEEAWPHIKNIFQSISAKSDGEPCCEWVGPAGAGHYVKMVHNGIEYGDMQLICEAYDIMKRLGGFTDKEISDVFAKWNNGVLDSFLVEITRDILKFDDVDGKPLVEKIMDTAGQKGTGKWTAINALDLGMPVTLIGEAVFARCLSALKNERIRASKVLPGPEVPKDAVKDREQFVDDLEQALYASKIISYAQGFMLIREAAATYGWKLNNPAIALMWRGGCIIRSVFLGQITKAYREEPDLENLLFNKFFADAVTKAQSGWRKSIALATTYGIPTPAFSTALSFYDGYRSERLPANLLQAQRDYFGAHTFRVLPECASDNLPVDKDIHINWTGHGGNVSSSTYQA</sequence>
<keyword id="KW-0002">3D-structure</keyword>
<keyword id="KW-0963">Cytoplasm</keyword>
<keyword id="KW-0903">Direct protein sequencing</keyword>
<keyword id="KW-0311">Gluconate utilization</keyword>
<keyword id="KW-0521">NADP</keyword>
<keyword id="KW-0560">Oxidoreductase</keyword>
<keyword id="KW-0570">Pentose shunt</keyword>
<keyword id="KW-0597">Phosphoprotein</keyword>
<keyword id="KW-1185">Reference proteome</keyword>
<name>6PGD1_YEAST</name>
<protein>
    <recommendedName>
        <fullName>6-phosphogluconate dehydrogenase, decarboxylating 1</fullName>
        <ecNumber>1.1.1.44</ecNumber>
    </recommendedName>
</protein>
<dbReference type="EC" id="1.1.1.44"/>
<dbReference type="EMBL" id="Z46631">
    <property type="protein sequence ID" value="CAA86600.1"/>
    <property type="molecule type" value="Genomic_DNA"/>
</dbReference>
<dbReference type="EMBL" id="U00028">
    <property type="protein sequence ID" value="AAB68452.1"/>
    <property type="molecule type" value="Genomic_DNA"/>
</dbReference>
<dbReference type="EMBL" id="U17155">
    <property type="protein sequence ID" value="AAA53637.1"/>
    <property type="molecule type" value="Genomic_DNA"/>
</dbReference>
<dbReference type="EMBL" id="BK006934">
    <property type="protein sequence ID" value="DAA06875.1"/>
    <property type="molecule type" value="Genomic_DNA"/>
</dbReference>
<dbReference type="PIR" id="S46671">
    <property type="entry name" value="S46671"/>
</dbReference>
<dbReference type="RefSeq" id="NP_012053.3">
    <property type="nucleotide sequence ID" value="NM_001179314.3"/>
</dbReference>
<dbReference type="PDB" id="2P4Q">
    <property type="method" value="X-ray"/>
    <property type="resolution" value="2.37 A"/>
    <property type="chains" value="A=1-489"/>
</dbReference>
<dbReference type="PDBsum" id="2P4Q"/>
<dbReference type="SMR" id="P38720"/>
<dbReference type="BioGRID" id="36616">
    <property type="interactions" value="198"/>
</dbReference>
<dbReference type="DIP" id="DIP-6604N"/>
<dbReference type="FunCoup" id="P38720">
    <property type="interactions" value="1200"/>
</dbReference>
<dbReference type="IntAct" id="P38720">
    <property type="interactions" value="150"/>
</dbReference>
<dbReference type="MINT" id="P38720"/>
<dbReference type="STRING" id="4932.YHR183W"/>
<dbReference type="iPTMnet" id="P38720"/>
<dbReference type="PaxDb" id="4932-YHR183W"/>
<dbReference type="PeptideAtlas" id="P38720"/>
<dbReference type="TopDownProteomics" id="P38720"/>
<dbReference type="EnsemblFungi" id="YHR183W_mRNA">
    <property type="protein sequence ID" value="YHR183W"/>
    <property type="gene ID" value="YHR183W"/>
</dbReference>
<dbReference type="GeneID" id="856589"/>
<dbReference type="KEGG" id="sce:YHR183W"/>
<dbReference type="AGR" id="SGD:S000001226"/>
<dbReference type="SGD" id="S000001226">
    <property type="gene designation" value="GND1"/>
</dbReference>
<dbReference type="VEuPathDB" id="FungiDB:YHR183W"/>
<dbReference type="eggNOG" id="KOG2653">
    <property type="taxonomic scope" value="Eukaryota"/>
</dbReference>
<dbReference type="GeneTree" id="ENSGT00390000009023"/>
<dbReference type="HOGENOM" id="CLU_024540_4_2_1"/>
<dbReference type="InParanoid" id="P38720"/>
<dbReference type="OMA" id="CVTHVGP"/>
<dbReference type="OrthoDB" id="434986at2759"/>
<dbReference type="BioCyc" id="YEAST:YHR183W-MONOMER"/>
<dbReference type="BRENDA" id="1.1.1.44">
    <property type="organism ID" value="984"/>
</dbReference>
<dbReference type="Reactome" id="R-SCE-71336">
    <property type="pathway name" value="Pentose phosphate pathway"/>
</dbReference>
<dbReference type="SABIO-RK" id="P38720"/>
<dbReference type="UniPathway" id="UPA00115">
    <property type="reaction ID" value="UER00410"/>
</dbReference>
<dbReference type="BioGRID-ORCS" id="856589">
    <property type="hits" value="9 hits in 10 CRISPR screens"/>
</dbReference>
<dbReference type="EvolutionaryTrace" id="P38720"/>
<dbReference type="PRO" id="PR:P38720"/>
<dbReference type="Proteomes" id="UP000002311">
    <property type="component" value="Chromosome VIII"/>
</dbReference>
<dbReference type="RNAct" id="P38720">
    <property type="molecule type" value="protein"/>
</dbReference>
<dbReference type="GO" id="GO:0005737">
    <property type="term" value="C:cytoplasm"/>
    <property type="evidence" value="ECO:0007005"/>
    <property type="project" value="SGD"/>
</dbReference>
<dbReference type="GO" id="GO:0005829">
    <property type="term" value="C:cytosol"/>
    <property type="evidence" value="ECO:0000318"/>
    <property type="project" value="GO_Central"/>
</dbReference>
<dbReference type="GO" id="GO:0005739">
    <property type="term" value="C:mitochondrion"/>
    <property type="evidence" value="ECO:0007005"/>
    <property type="project" value="SGD"/>
</dbReference>
<dbReference type="GO" id="GO:0050661">
    <property type="term" value="F:NADP binding"/>
    <property type="evidence" value="ECO:0000318"/>
    <property type="project" value="GO_Central"/>
</dbReference>
<dbReference type="GO" id="GO:0004616">
    <property type="term" value="F:phosphogluconate dehydrogenase (decarboxylating) activity"/>
    <property type="evidence" value="ECO:0000315"/>
    <property type="project" value="SGD"/>
</dbReference>
<dbReference type="GO" id="GO:0034599">
    <property type="term" value="P:cellular response to oxidative stress"/>
    <property type="evidence" value="ECO:0000315"/>
    <property type="project" value="SGD"/>
</dbReference>
<dbReference type="GO" id="GO:0019521">
    <property type="term" value="P:D-gluconate metabolic process"/>
    <property type="evidence" value="ECO:0007669"/>
    <property type="project" value="UniProtKB-KW"/>
</dbReference>
<dbReference type="GO" id="GO:0009051">
    <property type="term" value="P:pentose-phosphate shunt, oxidative branch"/>
    <property type="evidence" value="ECO:0000315"/>
    <property type="project" value="SGD"/>
</dbReference>
<dbReference type="FunFam" id="1.10.1040.10:FF:000002">
    <property type="entry name" value="6-phosphogluconate dehydrogenase, decarboxylating"/>
    <property type="match status" value="1"/>
</dbReference>
<dbReference type="FunFam" id="1.20.5.320:FF:000002">
    <property type="entry name" value="6-phosphogluconate dehydrogenase, decarboxylating"/>
    <property type="match status" value="1"/>
</dbReference>
<dbReference type="FunFam" id="3.40.50.720:FF:000007">
    <property type="entry name" value="6-phosphogluconate dehydrogenase, decarboxylating"/>
    <property type="match status" value="1"/>
</dbReference>
<dbReference type="Gene3D" id="1.20.5.320">
    <property type="entry name" value="6-Phosphogluconate Dehydrogenase, domain 3"/>
    <property type="match status" value="1"/>
</dbReference>
<dbReference type="Gene3D" id="1.10.1040.10">
    <property type="entry name" value="N-(1-d-carboxylethyl)-l-norvaline Dehydrogenase, domain 2"/>
    <property type="match status" value="1"/>
</dbReference>
<dbReference type="Gene3D" id="3.40.50.720">
    <property type="entry name" value="NAD(P)-binding Rossmann-like Domain"/>
    <property type="match status" value="1"/>
</dbReference>
<dbReference type="InterPro" id="IPR008927">
    <property type="entry name" value="6-PGluconate_DH-like_C_sf"/>
</dbReference>
<dbReference type="InterPro" id="IPR013328">
    <property type="entry name" value="6PGD_dom2"/>
</dbReference>
<dbReference type="InterPro" id="IPR006114">
    <property type="entry name" value="6PGDH_C"/>
</dbReference>
<dbReference type="InterPro" id="IPR006113">
    <property type="entry name" value="6PGDH_Gnd/GntZ"/>
</dbReference>
<dbReference type="InterPro" id="IPR006115">
    <property type="entry name" value="6PGDH_NADP-bd"/>
</dbReference>
<dbReference type="InterPro" id="IPR006184">
    <property type="entry name" value="6PGdom_BS"/>
</dbReference>
<dbReference type="InterPro" id="IPR036291">
    <property type="entry name" value="NAD(P)-bd_dom_sf"/>
</dbReference>
<dbReference type="InterPro" id="IPR006183">
    <property type="entry name" value="Pgluconate_DH"/>
</dbReference>
<dbReference type="NCBIfam" id="TIGR00873">
    <property type="entry name" value="gnd"/>
    <property type="match status" value="1"/>
</dbReference>
<dbReference type="NCBIfam" id="NF006765">
    <property type="entry name" value="PRK09287.1"/>
    <property type="match status" value="1"/>
</dbReference>
<dbReference type="PANTHER" id="PTHR11811">
    <property type="entry name" value="6-PHOSPHOGLUCONATE DEHYDROGENASE"/>
    <property type="match status" value="1"/>
</dbReference>
<dbReference type="Pfam" id="PF00393">
    <property type="entry name" value="6PGD"/>
    <property type="match status" value="1"/>
</dbReference>
<dbReference type="Pfam" id="PF03446">
    <property type="entry name" value="NAD_binding_2"/>
    <property type="match status" value="1"/>
</dbReference>
<dbReference type="PIRSF" id="PIRSF000109">
    <property type="entry name" value="6PGD"/>
    <property type="match status" value="1"/>
</dbReference>
<dbReference type="PRINTS" id="PR00076">
    <property type="entry name" value="6PGDHDRGNASE"/>
</dbReference>
<dbReference type="SMART" id="SM01350">
    <property type="entry name" value="6PGD"/>
    <property type="match status" value="1"/>
</dbReference>
<dbReference type="SUPFAM" id="SSF48179">
    <property type="entry name" value="6-phosphogluconate dehydrogenase C-terminal domain-like"/>
    <property type="match status" value="1"/>
</dbReference>
<dbReference type="SUPFAM" id="SSF51735">
    <property type="entry name" value="NAD(P)-binding Rossmann-fold domains"/>
    <property type="match status" value="1"/>
</dbReference>
<dbReference type="PROSITE" id="PS00461">
    <property type="entry name" value="6PGD"/>
    <property type="match status" value="1"/>
</dbReference>
<gene>
    <name type="primary">GND1</name>
    <name type="ordered locus">YHR183W</name>
</gene>
<reference key="1">
    <citation type="submission" date="1994-11" db="EMBL/GenBank/DDBJ databases">
        <authorList>
            <person name="Desouza M."/>
            <person name="Lobo Z."/>
            <person name="Maitra P.K."/>
        </authorList>
    </citation>
    <scope>NUCLEOTIDE SEQUENCE [GENOMIC DNA]</scope>
</reference>
<reference key="2">
    <citation type="journal article" date="1994" name="Science">
        <title>Complete nucleotide sequence of Saccharomyces cerevisiae chromosome VIII.</title>
        <authorList>
            <person name="Johnston M."/>
            <person name="Andrews S."/>
            <person name="Brinkman R."/>
            <person name="Cooper J."/>
            <person name="Ding H."/>
            <person name="Dover J."/>
            <person name="Du Z."/>
            <person name="Favello A."/>
            <person name="Fulton L."/>
            <person name="Gattung S."/>
            <person name="Geisel C."/>
            <person name="Kirsten J."/>
            <person name="Kucaba T."/>
            <person name="Hillier L.W."/>
            <person name="Jier M."/>
            <person name="Johnston L."/>
            <person name="Langston Y."/>
            <person name="Latreille P."/>
            <person name="Louis E.J."/>
            <person name="Macri C."/>
            <person name="Mardis E."/>
            <person name="Menezes S."/>
            <person name="Mouser L."/>
            <person name="Nhan M."/>
            <person name="Rifkin L."/>
            <person name="Riles L."/>
            <person name="St Peter H."/>
            <person name="Trevaskis E."/>
            <person name="Vaughan K."/>
            <person name="Vignati D."/>
            <person name="Wilcox L."/>
            <person name="Wohldman P."/>
            <person name="Waterston R."/>
            <person name="Wilson R."/>
            <person name="Vaudin M."/>
        </authorList>
    </citation>
    <scope>NUCLEOTIDE SEQUENCE [LARGE SCALE GENOMIC DNA]</scope>
    <source>
        <strain>ATCC 204508 / S288c</strain>
    </source>
</reference>
<reference key="3">
    <citation type="journal article" date="2014" name="G3 (Bethesda)">
        <title>The reference genome sequence of Saccharomyces cerevisiae: Then and now.</title>
        <authorList>
            <person name="Engel S.R."/>
            <person name="Dietrich F.S."/>
            <person name="Fisk D.G."/>
            <person name="Binkley G."/>
            <person name="Balakrishnan R."/>
            <person name="Costanzo M.C."/>
            <person name="Dwight S.S."/>
            <person name="Hitz B.C."/>
            <person name="Karra K."/>
            <person name="Nash R.S."/>
            <person name="Weng S."/>
            <person name="Wong E.D."/>
            <person name="Lloyd P."/>
            <person name="Skrzypek M.S."/>
            <person name="Miyasato S.R."/>
            <person name="Simison M."/>
            <person name="Cherry J.M."/>
        </authorList>
    </citation>
    <scope>GENOME REANNOTATION</scope>
    <source>
        <strain>ATCC 204508 / S288c</strain>
    </source>
</reference>
<reference key="4">
    <citation type="journal article" date="1994" name="Electrophoresis">
        <title>Protein identifications for a Saccharomyces cerevisiae protein database.</title>
        <authorList>
            <person name="Garrels J.I."/>
            <person name="Futcher B."/>
            <person name="Kobayashi R."/>
            <person name="Latter G.I."/>
            <person name="Schwender B."/>
            <person name="Volpe T."/>
            <person name="Warner J.R."/>
            <person name="McLaughlin C.S."/>
        </authorList>
    </citation>
    <scope>PROTEIN SEQUENCE OF 41-47 AND 120-131</scope>
    <source>
        <strain>ATCC 204508 / S288c</strain>
    </source>
</reference>
<reference key="5">
    <citation type="journal article" date="2003" name="Nature">
        <title>Global analysis of protein localization in budding yeast.</title>
        <authorList>
            <person name="Huh W.-K."/>
            <person name="Falvo J.V."/>
            <person name="Gerke L.C."/>
            <person name="Carroll A.S."/>
            <person name="Howson R.W."/>
            <person name="Weissman J.S."/>
            <person name="O'Shea E.K."/>
        </authorList>
    </citation>
    <scope>SUBCELLULAR LOCATION [LARGE SCALE ANALYSIS]</scope>
</reference>
<reference key="6">
    <citation type="journal article" date="2003" name="Nature">
        <title>Global analysis of protein expression in yeast.</title>
        <authorList>
            <person name="Ghaemmaghami S."/>
            <person name="Huh W.-K."/>
            <person name="Bower K."/>
            <person name="Howson R.W."/>
            <person name="Belle A."/>
            <person name="Dephoure N."/>
            <person name="O'Shea E.K."/>
            <person name="Weissman J.S."/>
        </authorList>
    </citation>
    <scope>LEVEL OF PROTEIN EXPRESSION [LARGE SCALE ANALYSIS]</scope>
</reference>
<reference key="7">
    <citation type="journal article" date="2009" name="Science">
        <title>Global analysis of Cdk1 substrate phosphorylation sites provides insights into evolution.</title>
        <authorList>
            <person name="Holt L.J."/>
            <person name="Tuch B.B."/>
            <person name="Villen J."/>
            <person name="Johnson A.D."/>
            <person name="Gygi S.P."/>
            <person name="Morgan D.O."/>
        </authorList>
    </citation>
    <scope>PHOSPHORYLATION [LARGE SCALE ANALYSIS] AT SER-50</scope>
    <scope>IDENTIFICATION BY MASS SPECTROMETRY [LARGE SCALE ANALYSIS]</scope>
</reference>
<reference key="8">
    <citation type="journal article" date="2007" name="BMC Struct. Biol.">
        <title>Crystal structure of Saccharomyces cerevisiae 6-phosphogluconate dehydrogenase Gnd1.</title>
        <authorList>
            <person name="He W."/>
            <person name="Wang Y."/>
            <person name="Liu W."/>
            <person name="Zhou C.Z."/>
        </authorList>
    </citation>
    <scope>X-RAY CRYSTALLOGRAPHY (2.37 ANGSTROMS) IN COMPLEX WITH CITRATE</scope>
    <scope>CATALYTIC ACTIVITY</scope>
    <scope>FUNCTION</scope>
    <scope>SUBUNIT</scope>
    <scope>BIOPHYSICOCHEMICAL PROPERTIES</scope>
</reference>
<feature type="chain" id="PRO_0000090075" description="6-phosphogluconate dehydrogenase, decarboxylating 1">
    <location>
        <begin position="1"/>
        <end position="489"/>
    </location>
</feature>
<feature type="active site" description="Proton acceptor" evidence="1">
    <location>
        <position position="182"/>
    </location>
</feature>
<feature type="active site" description="Proton donor" evidence="1">
    <location>
        <position position="189"/>
    </location>
</feature>
<feature type="binding site" evidence="1">
    <location>
        <begin position="9"/>
        <end position="14"/>
    </location>
    <ligand>
        <name>NADP(+)</name>
        <dbReference type="ChEBI" id="CHEBI:58349"/>
    </ligand>
</feature>
<feature type="binding site" evidence="1">
    <location>
        <begin position="32"/>
        <end position="34"/>
    </location>
    <ligand>
        <name>NADP(+)</name>
        <dbReference type="ChEBI" id="CHEBI:58349"/>
    </ligand>
</feature>
<feature type="binding site" evidence="1">
    <location>
        <begin position="74"/>
        <end position="76"/>
    </location>
    <ligand>
        <name>NADP(+)</name>
        <dbReference type="ChEBI" id="CHEBI:58349"/>
    </ligand>
</feature>
<feature type="binding site" evidence="1">
    <location>
        <position position="102"/>
    </location>
    <ligand>
        <name>NADP(+)</name>
        <dbReference type="ChEBI" id="CHEBI:58349"/>
    </ligand>
</feature>
<feature type="binding site" description="in other chain" evidence="1">
    <location>
        <position position="102"/>
    </location>
    <ligand>
        <name>substrate</name>
        <note>ligand shared between dimeric partners</note>
    </ligand>
</feature>
<feature type="binding site" description="in other chain" evidence="1">
    <location>
        <begin position="128"/>
        <end position="130"/>
    </location>
    <ligand>
        <name>substrate</name>
        <note>ligand shared between dimeric partners</note>
    </ligand>
</feature>
<feature type="binding site" description="in other chain" evidence="1">
    <location>
        <begin position="185"/>
        <end position="186"/>
    </location>
    <ligand>
        <name>substrate</name>
        <note>ligand shared between dimeric partners</note>
    </ligand>
</feature>
<feature type="binding site" description="in other chain" evidence="1">
    <location>
        <position position="190"/>
    </location>
    <ligand>
        <name>substrate</name>
        <note>ligand shared between dimeric partners</note>
    </ligand>
</feature>
<feature type="binding site" description="in other chain" evidence="1">
    <location>
        <position position="259"/>
    </location>
    <ligand>
        <name>substrate</name>
        <note>ligand shared between dimeric partners</note>
    </ligand>
</feature>
<feature type="binding site" description="in other chain" evidence="1">
    <location>
        <position position="286"/>
    </location>
    <ligand>
        <name>substrate</name>
        <note>ligand shared between dimeric partners</note>
    </ligand>
</feature>
<feature type="binding site" evidence="1">
    <location>
        <position position="446"/>
    </location>
    <ligand>
        <name>substrate</name>
        <note>ligand shared between dimeric partners</note>
    </ligand>
</feature>
<feature type="binding site" evidence="1">
    <location>
        <position position="452"/>
    </location>
    <ligand>
        <name>substrate</name>
        <note>ligand shared between dimeric partners</note>
    </ligand>
</feature>
<feature type="modified residue" description="Phosphoserine" evidence="6">
    <location>
        <position position="50"/>
    </location>
</feature>
<feature type="strand" evidence="7">
    <location>
        <begin position="4"/>
        <end position="8"/>
    </location>
</feature>
<feature type="helix" evidence="7">
    <location>
        <begin position="12"/>
        <end position="23"/>
    </location>
</feature>
<feature type="strand" evidence="7">
    <location>
        <begin position="28"/>
        <end position="31"/>
    </location>
</feature>
<feature type="strand" evidence="7">
    <location>
        <begin position="33"/>
        <end position="35"/>
    </location>
</feature>
<feature type="helix" evidence="7">
    <location>
        <begin position="36"/>
        <end position="43"/>
    </location>
</feature>
<feature type="turn" evidence="7">
    <location>
        <begin position="44"/>
        <end position="48"/>
    </location>
</feature>
<feature type="strand" evidence="7">
    <location>
        <begin position="49"/>
        <end position="52"/>
    </location>
</feature>
<feature type="helix" evidence="7">
    <location>
        <begin position="57"/>
        <end position="62"/>
    </location>
</feature>
<feature type="strand" evidence="7">
    <location>
        <begin position="69"/>
        <end position="72"/>
    </location>
</feature>
<feature type="helix" evidence="7">
    <location>
        <begin position="78"/>
        <end position="87"/>
    </location>
</feature>
<feature type="helix" evidence="7">
    <location>
        <begin position="88"/>
        <end position="90"/>
    </location>
</feature>
<feature type="strand" evidence="7">
    <location>
        <begin position="96"/>
        <end position="99"/>
    </location>
</feature>
<feature type="helix" evidence="7">
    <location>
        <begin position="105"/>
        <end position="117"/>
    </location>
</feature>
<feature type="strand" evidence="7">
    <location>
        <begin position="121"/>
        <end position="129"/>
    </location>
</feature>
<feature type="helix" evidence="7">
    <location>
        <begin position="130"/>
        <end position="136"/>
    </location>
</feature>
<feature type="strand" evidence="7">
    <location>
        <begin position="139"/>
        <end position="144"/>
    </location>
</feature>
<feature type="helix" evidence="7">
    <location>
        <begin position="146"/>
        <end position="148"/>
    </location>
</feature>
<feature type="helix" evidence="7">
    <location>
        <begin position="149"/>
        <end position="159"/>
    </location>
</feature>
<feature type="strand" evidence="7">
    <location>
        <begin position="166"/>
        <end position="168"/>
    </location>
</feature>
<feature type="helix" evidence="7">
    <location>
        <begin position="177"/>
        <end position="205"/>
    </location>
</feature>
<feature type="helix" evidence="7">
    <location>
        <begin position="211"/>
        <end position="222"/>
    </location>
</feature>
<feature type="turn" evidence="7">
    <location>
        <begin position="223"/>
        <end position="226"/>
    </location>
</feature>
<feature type="helix" evidence="7">
    <location>
        <begin position="229"/>
        <end position="238"/>
    </location>
</feature>
<feature type="strand" evidence="7">
    <location>
        <begin position="245"/>
        <end position="247"/>
    </location>
</feature>
<feature type="helix" evidence="7">
    <location>
        <begin position="248"/>
        <end position="251"/>
    </location>
</feature>
<feature type="helix" evidence="7">
    <location>
        <begin position="261"/>
        <end position="272"/>
    </location>
</feature>
<feature type="helix" evidence="7">
    <location>
        <begin position="277"/>
        <end position="290"/>
    </location>
</feature>
<feature type="helix" evidence="7">
    <location>
        <begin position="292"/>
        <end position="301"/>
    </location>
</feature>
<feature type="helix" evidence="7">
    <location>
        <begin position="315"/>
        <end position="348"/>
    </location>
</feature>
<feature type="helix" evidence="7">
    <location>
        <begin position="354"/>
        <end position="362"/>
    </location>
</feature>
<feature type="strand" evidence="7">
    <location>
        <begin position="363"/>
        <end position="365"/>
    </location>
</feature>
<feature type="helix" evidence="7">
    <location>
        <begin position="370"/>
        <end position="381"/>
    </location>
</feature>
<feature type="helix" evidence="7">
    <location>
        <begin position="388"/>
        <end position="390"/>
    </location>
</feature>
<feature type="helix" evidence="7">
    <location>
        <begin position="392"/>
        <end position="415"/>
    </location>
</feature>
<feature type="helix" evidence="7">
    <location>
        <begin position="420"/>
        <end position="432"/>
    </location>
</feature>
<feature type="helix" evidence="7">
    <location>
        <begin position="439"/>
        <end position="449"/>
    </location>
</feature>
<feature type="helix" evidence="7">
    <location>
        <begin position="458"/>
        <end position="460"/>
    </location>
</feature>
<feature type="strand" evidence="7">
    <location>
        <begin position="463"/>
        <end position="465"/>
    </location>
</feature>
<organism>
    <name type="scientific">Saccharomyces cerevisiae (strain ATCC 204508 / S288c)</name>
    <name type="common">Baker's yeast</name>
    <dbReference type="NCBI Taxonomy" id="559292"/>
    <lineage>
        <taxon>Eukaryota</taxon>
        <taxon>Fungi</taxon>
        <taxon>Dikarya</taxon>
        <taxon>Ascomycota</taxon>
        <taxon>Saccharomycotina</taxon>
        <taxon>Saccharomycetes</taxon>
        <taxon>Saccharomycetales</taxon>
        <taxon>Saccharomycetaceae</taxon>
        <taxon>Saccharomyces</taxon>
    </lineage>
</organism>